<evidence type="ECO:0000255" key="1">
    <source>
        <dbReference type="HAMAP-Rule" id="MF_00371"/>
    </source>
</evidence>
<evidence type="ECO:0000305" key="2"/>
<proteinExistence type="inferred from homology"/>
<feature type="chain" id="PRO_1000072125" description="Small ribosomal subunit protein eS27">
    <location>
        <begin position="1"/>
        <end position="62"/>
    </location>
</feature>
<feature type="zinc finger region" description="C4-type" evidence="1">
    <location>
        <begin position="17"/>
        <end position="39"/>
    </location>
</feature>
<feature type="binding site" evidence="1">
    <location>
        <position position="17"/>
    </location>
    <ligand>
        <name>Zn(2+)</name>
        <dbReference type="ChEBI" id="CHEBI:29105"/>
    </ligand>
</feature>
<feature type="binding site" evidence="1">
    <location>
        <position position="20"/>
    </location>
    <ligand>
        <name>Zn(2+)</name>
        <dbReference type="ChEBI" id="CHEBI:29105"/>
    </ligand>
</feature>
<feature type="binding site" evidence="1">
    <location>
        <position position="36"/>
    </location>
    <ligand>
        <name>Zn(2+)</name>
        <dbReference type="ChEBI" id="CHEBI:29105"/>
    </ligand>
</feature>
<feature type="binding site" evidence="1">
    <location>
        <position position="39"/>
    </location>
    <ligand>
        <name>Zn(2+)</name>
        <dbReference type="ChEBI" id="CHEBI:29105"/>
    </ligand>
</feature>
<dbReference type="EMBL" id="CP000559">
    <property type="protein sequence ID" value="ABN07468.1"/>
    <property type="molecule type" value="Genomic_DNA"/>
</dbReference>
<dbReference type="RefSeq" id="WP_011833671.1">
    <property type="nucleotide sequence ID" value="NC_008942.1"/>
</dbReference>
<dbReference type="SMR" id="A2ST12"/>
<dbReference type="STRING" id="410358.Mlab_1300"/>
<dbReference type="GeneID" id="4794725"/>
<dbReference type="KEGG" id="mla:Mlab_1300"/>
<dbReference type="eggNOG" id="arCOG04108">
    <property type="taxonomic scope" value="Archaea"/>
</dbReference>
<dbReference type="HOGENOM" id="CLU_199465_0_0_2"/>
<dbReference type="OrthoDB" id="5718at2157"/>
<dbReference type="Proteomes" id="UP000000365">
    <property type="component" value="Chromosome"/>
</dbReference>
<dbReference type="GO" id="GO:1990904">
    <property type="term" value="C:ribonucleoprotein complex"/>
    <property type="evidence" value="ECO:0007669"/>
    <property type="project" value="UniProtKB-KW"/>
</dbReference>
<dbReference type="GO" id="GO:0005840">
    <property type="term" value="C:ribosome"/>
    <property type="evidence" value="ECO:0007669"/>
    <property type="project" value="UniProtKB-KW"/>
</dbReference>
<dbReference type="GO" id="GO:0003735">
    <property type="term" value="F:structural constituent of ribosome"/>
    <property type="evidence" value="ECO:0007669"/>
    <property type="project" value="InterPro"/>
</dbReference>
<dbReference type="GO" id="GO:0008270">
    <property type="term" value="F:zinc ion binding"/>
    <property type="evidence" value="ECO:0007669"/>
    <property type="project" value="UniProtKB-UniRule"/>
</dbReference>
<dbReference type="GO" id="GO:0006412">
    <property type="term" value="P:translation"/>
    <property type="evidence" value="ECO:0007669"/>
    <property type="project" value="UniProtKB-UniRule"/>
</dbReference>
<dbReference type="Gene3D" id="2.20.25.100">
    <property type="entry name" value="Zn-binding ribosomal proteins"/>
    <property type="match status" value="1"/>
</dbReference>
<dbReference type="HAMAP" id="MF_00371">
    <property type="entry name" value="Ribosomal_eS27"/>
    <property type="match status" value="1"/>
</dbReference>
<dbReference type="InterPro" id="IPR000592">
    <property type="entry name" value="Ribosomal_eS27"/>
</dbReference>
<dbReference type="InterPro" id="IPR023407">
    <property type="entry name" value="Ribosomal_eS27_Zn-bd_dom_sf"/>
</dbReference>
<dbReference type="InterPro" id="IPR011332">
    <property type="entry name" value="Ribosomal_zn-bd"/>
</dbReference>
<dbReference type="NCBIfam" id="NF001629">
    <property type="entry name" value="PRK00415.1"/>
    <property type="match status" value="1"/>
</dbReference>
<dbReference type="PANTHER" id="PTHR11594">
    <property type="entry name" value="40S RIBOSOMAL PROTEIN S27"/>
    <property type="match status" value="1"/>
</dbReference>
<dbReference type="Pfam" id="PF01667">
    <property type="entry name" value="Ribosomal_S27e"/>
    <property type="match status" value="1"/>
</dbReference>
<dbReference type="SUPFAM" id="SSF57829">
    <property type="entry name" value="Zn-binding ribosomal proteins"/>
    <property type="match status" value="1"/>
</dbReference>
<reference key="1">
    <citation type="journal article" date="2009" name="Stand. Genomic Sci.">
        <title>Complete genome sequence of Methanocorpusculum labreanum type strain Z.</title>
        <authorList>
            <person name="Anderson I.J."/>
            <person name="Sieprawska-Lupa M."/>
            <person name="Goltsman E."/>
            <person name="Lapidus A."/>
            <person name="Copeland A."/>
            <person name="Glavina Del Rio T."/>
            <person name="Tice H."/>
            <person name="Dalin E."/>
            <person name="Barry K."/>
            <person name="Pitluck S."/>
            <person name="Hauser L."/>
            <person name="Land M."/>
            <person name="Lucas S."/>
            <person name="Richardson P."/>
            <person name="Whitman W.B."/>
            <person name="Kyrpides N.C."/>
        </authorList>
    </citation>
    <scope>NUCLEOTIDE SEQUENCE [LARGE SCALE GENOMIC DNA]</scope>
    <source>
        <strain>ATCC 43576 / DSM 4855 / Z</strain>
    </source>
</reference>
<comment type="cofactor">
    <cofactor evidence="1">
        <name>Zn(2+)</name>
        <dbReference type="ChEBI" id="CHEBI:29105"/>
    </cofactor>
    <text evidence="1">Binds 1 zinc ion per subunit.</text>
</comment>
<comment type="subunit">
    <text evidence="1">Part of the 30S ribosomal subunit.</text>
</comment>
<comment type="similarity">
    <text evidence="1">Belongs to the eukaryotic ribosomal protein eS27 family.</text>
</comment>
<sequence>MVKASRETRSKFLKVKCPDCENEQLVFEKATSVVECTVCGRILAEPTGGKAALKADIVATFE</sequence>
<keyword id="KW-0479">Metal-binding</keyword>
<keyword id="KW-1185">Reference proteome</keyword>
<keyword id="KW-0687">Ribonucleoprotein</keyword>
<keyword id="KW-0689">Ribosomal protein</keyword>
<keyword id="KW-0862">Zinc</keyword>
<keyword id="KW-0863">Zinc-finger</keyword>
<organism>
    <name type="scientific">Methanocorpusculum labreanum (strain ATCC 43576 / DSM 4855 / Z)</name>
    <dbReference type="NCBI Taxonomy" id="410358"/>
    <lineage>
        <taxon>Archaea</taxon>
        <taxon>Methanobacteriati</taxon>
        <taxon>Methanobacteriota</taxon>
        <taxon>Stenosarchaea group</taxon>
        <taxon>Methanomicrobia</taxon>
        <taxon>Methanomicrobiales</taxon>
        <taxon>Methanocorpusculaceae</taxon>
        <taxon>Methanocorpusculum</taxon>
    </lineage>
</organism>
<gene>
    <name evidence="1" type="primary">rps27e</name>
    <name type="ordered locus">Mlab_1300</name>
</gene>
<accession>A2ST12</accession>
<protein>
    <recommendedName>
        <fullName evidence="1">Small ribosomal subunit protein eS27</fullName>
    </recommendedName>
    <alternativeName>
        <fullName evidence="2">30S ribosomal protein S27e</fullName>
    </alternativeName>
</protein>
<name>RS27_METLZ</name>